<accession>Q7MIG1</accession>
<reference key="1">
    <citation type="journal article" date="2003" name="Genome Res.">
        <title>Comparative genome analysis of Vibrio vulnificus, a marine pathogen.</title>
        <authorList>
            <person name="Chen C.-Y."/>
            <person name="Wu K.-M."/>
            <person name="Chang Y.-C."/>
            <person name="Chang C.-H."/>
            <person name="Tsai H.-C."/>
            <person name="Liao T.-L."/>
            <person name="Liu Y.-M."/>
            <person name="Chen H.-J."/>
            <person name="Shen A.B.-T."/>
            <person name="Li J.-C."/>
            <person name="Su T.-L."/>
            <person name="Shao C.-P."/>
            <person name="Lee C.-T."/>
            <person name="Hor L.-I."/>
            <person name="Tsai S.-F."/>
        </authorList>
    </citation>
    <scope>NUCLEOTIDE SEQUENCE [LARGE SCALE GENOMIC DNA]</scope>
    <source>
        <strain>YJ016</strain>
    </source>
</reference>
<feature type="chain" id="PRO_0000161232" description="Elongation factor Ts">
    <location>
        <begin position="1"/>
        <end position="280"/>
    </location>
</feature>
<feature type="region of interest" description="Involved in Mg(2+) ion dislocation from EF-Tu" evidence="1">
    <location>
        <begin position="79"/>
        <end position="82"/>
    </location>
</feature>
<comment type="function">
    <text evidence="1">Associates with the EF-Tu.GDP complex and induces the exchange of GDP to GTP. It remains bound to the aminoacyl-tRNA.EF-Tu.GTP complex up to the GTP hydrolysis stage on the ribosome.</text>
</comment>
<comment type="subcellular location">
    <subcellularLocation>
        <location evidence="1">Cytoplasm</location>
    </subcellularLocation>
</comment>
<comment type="similarity">
    <text evidence="1">Belongs to the EF-Ts family.</text>
</comment>
<sequence>MAVTAALVKELRERTGAGMMECKKALVETNGDVELAIENMRKSGAAKAAKKAGNVAAEGAIFIKEENGVAVLLEVNCQTDFVAKDGNFTAFAGKVAAEALASKASIEELQAKFEEERVALVAKIGENINIRRVQFVEGTALASYRHGEKIGVVVAGEGDAETLKHIAMHVAASRPEYVNPEDVPADVVAKEREVQVEIAMNEGKPKEIAEKMVEGRMKKFTGEVSLTGQPFVMEPKKSVAEILKERGASVVTFVRLEVGEGIEKAEGLSFAEEVALAQKG</sequence>
<evidence type="ECO:0000255" key="1">
    <source>
        <dbReference type="HAMAP-Rule" id="MF_00050"/>
    </source>
</evidence>
<gene>
    <name evidence="1" type="primary">tsf</name>
    <name type="ordered locus">VV2556</name>
</gene>
<protein>
    <recommendedName>
        <fullName evidence="1">Elongation factor Ts</fullName>
        <shortName evidence="1">EF-Ts</shortName>
    </recommendedName>
</protein>
<keyword id="KW-0963">Cytoplasm</keyword>
<keyword id="KW-0251">Elongation factor</keyword>
<keyword id="KW-0648">Protein biosynthesis</keyword>
<name>EFTS_VIBVY</name>
<organism>
    <name type="scientific">Vibrio vulnificus (strain YJ016)</name>
    <dbReference type="NCBI Taxonomy" id="196600"/>
    <lineage>
        <taxon>Bacteria</taxon>
        <taxon>Pseudomonadati</taxon>
        <taxon>Pseudomonadota</taxon>
        <taxon>Gammaproteobacteria</taxon>
        <taxon>Vibrionales</taxon>
        <taxon>Vibrionaceae</taxon>
        <taxon>Vibrio</taxon>
    </lineage>
</organism>
<dbReference type="EMBL" id="BA000037">
    <property type="protein sequence ID" value="BAC95320.1"/>
    <property type="molecule type" value="Genomic_DNA"/>
</dbReference>
<dbReference type="RefSeq" id="WP_011079763.1">
    <property type="nucleotide sequence ID" value="NC_005139.1"/>
</dbReference>
<dbReference type="SMR" id="Q7MIG1"/>
<dbReference type="STRING" id="672.VV93_v1c22750"/>
<dbReference type="GeneID" id="93896088"/>
<dbReference type="KEGG" id="vvy:VV2556"/>
<dbReference type="eggNOG" id="COG0264">
    <property type="taxonomic scope" value="Bacteria"/>
</dbReference>
<dbReference type="HOGENOM" id="CLU_047155_0_2_6"/>
<dbReference type="Proteomes" id="UP000002675">
    <property type="component" value="Chromosome I"/>
</dbReference>
<dbReference type="GO" id="GO:0005737">
    <property type="term" value="C:cytoplasm"/>
    <property type="evidence" value="ECO:0007669"/>
    <property type="project" value="UniProtKB-SubCell"/>
</dbReference>
<dbReference type="GO" id="GO:0003746">
    <property type="term" value="F:translation elongation factor activity"/>
    <property type="evidence" value="ECO:0007669"/>
    <property type="project" value="UniProtKB-UniRule"/>
</dbReference>
<dbReference type="CDD" id="cd14275">
    <property type="entry name" value="UBA_EF-Ts"/>
    <property type="match status" value="1"/>
</dbReference>
<dbReference type="FunFam" id="1.10.286.20:FF:000001">
    <property type="entry name" value="Elongation factor Ts"/>
    <property type="match status" value="1"/>
</dbReference>
<dbReference type="FunFam" id="1.10.8.10:FF:000001">
    <property type="entry name" value="Elongation factor Ts"/>
    <property type="match status" value="1"/>
</dbReference>
<dbReference type="FunFam" id="3.30.479.20:FF:000001">
    <property type="entry name" value="Elongation factor Ts"/>
    <property type="match status" value="1"/>
</dbReference>
<dbReference type="Gene3D" id="1.10.286.20">
    <property type="match status" value="1"/>
</dbReference>
<dbReference type="Gene3D" id="1.10.8.10">
    <property type="entry name" value="DNA helicase RuvA subunit, C-terminal domain"/>
    <property type="match status" value="1"/>
</dbReference>
<dbReference type="Gene3D" id="3.30.479.20">
    <property type="entry name" value="Elongation factor Ts, dimerisation domain"/>
    <property type="match status" value="2"/>
</dbReference>
<dbReference type="HAMAP" id="MF_00050">
    <property type="entry name" value="EF_Ts"/>
    <property type="match status" value="1"/>
</dbReference>
<dbReference type="InterPro" id="IPR036402">
    <property type="entry name" value="EF-Ts_dimer_sf"/>
</dbReference>
<dbReference type="InterPro" id="IPR001816">
    <property type="entry name" value="Transl_elong_EFTs/EF1B"/>
</dbReference>
<dbReference type="InterPro" id="IPR014039">
    <property type="entry name" value="Transl_elong_EFTs/EF1B_dimer"/>
</dbReference>
<dbReference type="InterPro" id="IPR018101">
    <property type="entry name" value="Transl_elong_Ts_CS"/>
</dbReference>
<dbReference type="InterPro" id="IPR009060">
    <property type="entry name" value="UBA-like_sf"/>
</dbReference>
<dbReference type="NCBIfam" id="TIGR00116">
    <property type="entry name" value="tsf"/>
    <property type="match status" value="1"/>
</dbReference>
<dbReference type="PANTHER" id="PTHR11741">
    <property type="entry name" value="ELONGATION FACTOR TS"/>
    <property type="match status" value="1"/>
</dbReference>
<dbReference type="PANTHER" id="PTHR11741:SF0">
    <property type="entry name" value="ELONGATION FACTOR TS, MITOCHONDRIAL"/>
    <property type="match status" value="1"/>
</dbReference>
<dbReference type="Pfam" id="PF00889">
    <property type="entry name" value="EF_TS"/>
    <property type="match status" value="1"/>
</dbReference>
<dbReference type="SUPFAM" id="SSF54713">
    <property type="entry name" value="Elongation factor Ts (EF-Ts), dimerisation domain"/>
    <property type="match status" value="2"/>
</dbReference>
<dbReference type="SUPFAM" id="SSF46934">
    <property type="entry name" value="UBA-like"/>
    <property type="match status" value="1"/>
</dbReference>
<dbReference type="PROSITE" id="PS01126">
    <property type="entry name" value="EF_TS_1"/>
    <property type="match status" value="1"/>
</dbReference>
<dbReference type="PROSITE" id="PS01127">
    <property type="entry name" value="EF_TS_2"/>
    <property type="match status" value="1"/>
</dbReference>
<proteinExistence type="inferred from homology"/>